<keyword id="KW-0165">Cleavage on pair of basic residues</keyword>
<keyword id="KW-1015">Disulfide bond</keyword>
<keyword id="KW-0378">Hydrolase</keyword>
<keyword id="KW-0479">Metal-binding</keyword>
<keyword id="KW-0482">Metalloprotease</keyword>
<keyword id="KW-0645">Protease</keyword>
<keyword id="KW-1185">Reference proteome</keyword>
<keyword id="KW-0964">Secreted</keyword>
<keyword id="KW-0732">Signal</keyword>
<keyword id="KW-0843">Virulence</keyword>
<keyword id="KW-0862">Zinc</keyword>
<keyword id="KW-0865">Zymogen</keyword>
<gene>
    <name type="ORF">MGYG_03465</name>
</gene>
<organism>
    <name type="scientific">Arthroderma gypseum (strain ATCC MYA-4604 / CBS 118893)</name>
    <name type="common">Microsporum gypseum</name>
    <dbReference type="NCBI Taxonomy" id="535722"/>
    <lineage>
        <taxon>Eukaryota</taxon>
        <taxon>Fungi</taxon>
        <taxon>Dikarya</taxon>
        <taxon>Ascomycota</taxon>
        <taxon>Pezizomycotina</taxon>
        <taxon>Eurotiomycetes</taxon>
        <taxon>Eurotiomycetidae</taxon>
        <taxon>Onygenales</taxon>
        <taxon>Arthrodermataceae</taxon>
        <taxon>Nannizzia</taxon>
    </lineage>
</organism>
<accession>E4US45</accession>
<proteinExistence type="inferred from homology"/>
<sequence length="371" mass="40240">MQFVAVLAALGALVAPAAAYPHAPMNETLVDVQLTAVGNTMVKATITNKGDSVLNMLQFNTIMDENPTRKVMVFQDGVEVPFTGMMPRYLMSDLTEEFFTTLPPQASVEHTFDIAATHDLSAGGKYVISASGAVPTAEEHSTTITSTALYESNELHMEVDGVQAAAVEQAMNFTPEMQSIHARALEKRTKIVSGSCNQNTLRATMNALGNSARLAQAASRAASQNPRKFQEYFRTNDANAKQRVIARLNSVARESSSANAGVTTYYCSDTMGGCKPRVLAYTLPSRNLVVNCPIYYNLPPLTKQCHAQDQATTTLHEFTHNPAVASPHCQDYAYGYQQCISLPAAKAVQNADNYALFANGMLSNLFVFTLN</sequence>
<evidence type="ECO:0000250" key="1"/>
<evidence type="ECO:0000255" key="2"/>
<evidence type="ECO:0000255" key="3">
    <source>
        <dbReference type="PROSITE-ProRule" id="PRU10095"/>
    </source>
</evidence>
<evidence type="ECO:0000305" key="4"/>
<protein>
    <recommendedName>
        <fullName>Neutral protease 2 homolog MGYG_03465</fullName>
        <ecNumber>3.4.24.39</ecNumber>
    </recommendedName>
    <alternativeName>
        <fullName>Deuterolysin MGYG_03465</fullName>
    </alternativeName>
</protein>
<dbReference type="EC" id="3.4.24.39"/>
<dbReference type="EMBL" id="DS989824">
    <property type="protein sequence ID" value="EFR00463.1"/>
    <property type="molecule type" value="Genomic_DNA"/>
</dbReference>
<dbReference type="RefSeq" id="XP_003173293.1">
    <property type="nucleotide sequence ID" value="XM_003173245.1"/>
</dbReference>
<dbReference type="SMR" id="E4US45"/>
<dbReference type="STRING" id="535722.E4US45"/>
<dbReference type="MEROPS" id="M35.001"/>
<dbReference type="GeneID" id="10028555"/>
<dbReference type="VEuPathDB" id="FungiDB:MGYG_03465"/>
<dbReference type="eggNOG" id="ENOG502SGF5">
    <property type="taxonomic scope" value="Eukaryota"/>
</dbReference>
<dbReference type="HOGENOM" id="CLU_039313_1_0_1"/>
<dbReference type="InParanoid" id="E4US45"/>
<dbReference type="OMA" id="NNIASQC"/>
<dbReference type="OrthoDB" id="412874at2759"/>
<dbReference type="Proteomes" id="UP000002669">
    <property type="component" value="Unassembled WGS sequence"/>
</dbReference>
<dbReference type="GO" id="GO:0005576">
    <property type="term" value="C:extracellular region"/>
    <property type="evidence" value="ECO:0007669"/>
    <property type="project" value="UniProtKB-SubCell"/>
</dbReference>
<dbReference type="GO" id="GO:0046872">
    <property type="term" value="F:metal ion binding"/>
    <property type="evidence" value="ECO:0007669"/>
    <property type="project" value="UniProtKB-KW"/>
</dbReference>
<dbReference type="GO" id="GO:0004222">
    <property type="term" value="F:metalloendopeptidase activity"/>
    <property type="evidence" value="ECO:0007669"/>
    <property type="project" value="InterPro"/>
</dbReference>
<dbReference type="GO" id="GO:0006508">
    <property type="term" value="P:proteolysis"/>
    <property type="evidence" value="ECO:0007669"/>
    <property type="project" value="UniProtKB-KW"/>
</dbReference>
<dbReference type="CDD" id="cd11008">
    <property type="entry name" value="M35_deuterolysin_like"/>
    <property type="match status" value="1"/>
</dbReference>
<dbReference type="Gene3D" id="2.60.40.2970">
    <property type="match status" value="1"/>
</dbReference>
<dbReference type="Gene3D" id="3.40.390.10">
    <property type="entry name" value="Collagenase (Catalytic Domain)"/>
    <property type="match status" value="1"/>
</dbReference>
<dbReference type="InterPro" id="IPR050414">
    <property type="entry name" value="Fungal_M35_metalloproteases"/>
</dbReference>
<dbReference type="InterPro" id="IPR024079">
    <property type="entry name" value="MetalloPept_cat_dom_sf"/>
</dbReference>
<dbReference type="InterPro" id="IPR001384">
    <property type="entry name" value="Peptidase_M35"/>
</dbReference>
<dbReference type="PANTHER" id="PTHR37016">
    <property type="match status" value="1"/>
</dbReference>
<dbReference type="PANTHER" id="PTHR37016:SF7">
    <property type="entry name" value="NEUTRAL PROTEASE 2"/>
    <property type="match status" value="1"/>
</dbReference>
<dbReference type="Pfam" id="PF02102">
    <property type="entry name" value="Peptidase_M35"/>
    <property type="match status" value="1"/>
</dbReference>
<dbReference type="PRINTS" id="PR00768">
    <property type="entry name" value="DEUTEROLYSIN"/>
</dbReference>
<dbReference type="SUPFAM" id="SSF55486">
    <property type="entry name" value="Metalloproteases ('zincins'), catalytic domain"/>
    <property type="match status" value="1"/>
</dbReference>
<dbReference type="PROSITE" id="PS00142">
    <property type="entry name" value="ZINC_PROTEASE"/>
    <property type="match status" value="1"/>
</dbReference>
<comment type="function">
    <text evidence="1">Secreted metalloproteinase that allows assimilation of proteinaceous substrates. Shows high activities on basic nuclear substrates such as histone and protamine. May be involved in virulence (By similarity).</text>
</comment>
<comment type="catalytic activity">
    <reaction>
        <text>Preferential cleavage of bonds with hydrophobic residues in P1'. Also 3-Asn-|-Gln-4 and 8-Gly-|-Ser-9 bonds in insulin B chain.</text>
        <dbReference type="EC" id="3.4.24.39"/>
    </reaction>
</comment>
<comment type="cofactor">
    <cofactor evidence="1">
        <name>Zn(2+)</name>
        <dbReference type="ChEBI" id="CHEBI:29105"/>
    </cofactor>
    <text evidence="1">Binds 1 zinc ion per subunit.</text>
</comment>
<comment type="subcellular location">
    <subcellularLocation>
        <location evidence="1">Secreted</location>
    </subcellularLocation>
</comment>
<comment type="similarity">
    <text evidence="4">Belongs to the peptidase M35 family.</text>
</comment>
<name>NPIID_ARTGP</name>
<reference key="1">
    <citation type="journal article" date="2012" name="MBio">
        <title>Comparative genome analysis of Trichophyton rubrum and related dermatophytes reveals candidate genes involved in infection.</title>
        <authorList>
            <person name="Martinez D.A."/>
            <person name="Oliver B.G."/>
            <person name="Graeser Y."/>
            <person name="Goldberg J.M."/>
            <person name="Li W."/>
            <person name="Martinez-Rossi N.M."/>
            <person name="Monod M."/>
            <person name="Shelest E."/>
            <person name="Barton R.C."/>
            <person name="Birch E."/>
            <person name="Brakhage A.A."/>
            <person name="Chen Z."/>
            <person name="Gurr S.J."/>
            <person name="Heiman D."/>
            <person name="Heitman J."/>
            <person name="Kosti I."/>
            <person name="Rossi A."/>
            <person name="Saif S."/>
            <person name="Samalova M."/>
            <person name="Saunders C.W."/>
            <person name="Shea T."/>
            <person name="Summerbell R.C."/>
            <person name="Xu J."/>
            <person name="Young S."/>
            <person name="Zeng Q."/>
            <person name="Birren B.W."/>
            <person name="Cuomo C.A."/>
            <person name="White T.C."/>
        </authorList>
    </citation>
    <scope>NUCLEOTIDE SEQUENCE [LARGE SCALE GENOMIC DNA]</scope>
    <source>
        <strain>ATCC MYA-4604 / CBS 118893</strain>
    </source>
</reference>
<feature type="signal peptide" evidence="2">
    <location>
        <begin position="1"/>
        <end position="19"/>
    </location>
</feature>
<feature type="propeptide" id="PRO_0000407140" evidence="1">
    <location>
        <begin position="20"/>
        <end position="188"/>
    </location>
</feature>
<feature type="chain" id="PRO_0000407141" description="Neutral protease 2 homolog MGYG_03465">
    <location>
        <begin position="189"/>
        <end position="371"/>
    </location>
</feature>
<feature type="active site" evidence="3">
    <location>
        <position position="317"/>
    </location>
</feature>
<feature type="binding site" evidence="3">
    <location>
        <position position="316"/>
    </location>
    <ligand>
        <name>Zn(2+)</name>
        <dbReference type="ChEBI" id="CHEBI:29105"/>
        <note>catalytic</note>
    </ligand>
</feature>
<feature type="binding site" evidence="3">
    <location>
        <position position="320"/>
    </location>
    <ligand>
        <name>Zn(2+)</name>
        <dbReference type="ChEBI" id="CHEBI:29105"/>
        <note>catalytic</note>
    </ligand>
</feature>
<feature type="binding site" evidence="3">
    <location>
        <position position="331"/>
    </location>
    <ligand>
        <name>Zn(2+)</name>
        <dbReference type="ChEBI" id="CHEBI:29105"/>
        <note>catalytic</note>
    </ligand>
</feature>
<feature type="disulfide bond" evidence="1">
    <location>
        <begin position="196"/>
        <end position="267"/>
    </location>
</feature>
<feature type="disulfide bond" evidence="1">
    <location>
        <begin position="274"/>
        <end position="292"/>
    </location>
</feature>